<organism>
    <name type="scientific">Sinorhizobium fredii (strain NBRC 101917 / NGR234)</name>
    <dbReference type="NCBI Taxonomy" id="394"/>
    <lineage>
        <taxon>Bacteria</taxon>
        <taxon>Pseudomonadati</taxon>
        <taxon>Pseudomonadota</taxon>
        <taxon>Alphaproteobacteria</taxon>
        <taxon>Hyphomicrobiales</taxon>
        <taxon>Rhizobiaceae</taxon>
        <taxon>Sinorhizobium/Ensifer group</taxon>
        <taxon>Sinorhizobium</taxon>
    </lineage>
</organism>
<sequence length="536" mass="58146">MEQLGTRNPSNGLETIGFSDLSVVRYNFEAAELYEEALRRGEAQLTAHGALCARTGQHTGRSPKDKYVVRDAATGDQIWWDNNSAISPENFERLRQDMLAHAKGMSLYVQDLVGGADQENALPTRVVTEFAWHSLFIRNLLIRPPREALASFLPKLTIIDLPSFKANPERHGCRGETIIACDLTKGLVLIGGTSYAGEMKKSVFTVLNYLLPNKAVMPMHCSANVGPAGDTAIFFGLSGTGKTTLSADPNRTLIGDDEHGWSDKGVFNFEGGCYAKAIRLSEAAEPEIFATTRRFGTVMENVVLDERRAPDFDNGSLTENTRIAYPLDFIPNASETGTAPQPRTIIMLTADAFGVLPPIAKLTPEQAMYHFLSGYTAKVAGTEKGVTEPEATFSTCFGAPFMPRHPSEYGNLLKDLIARNGVTCWLVNTGWTGGAYGTGSRMPIKVTRALLSAALDGSLNSAAFRTDANFGFAVPVSVPGVDDRILDPRSTWSDGQAYDAQARRLVDMFIANFAKFESHVDGSVRDAAPGTKLAAE</sequence>
<evidence type="ECO:0000255" key="1">
    <source>
        <dbReference type="HAMAP-Rule" id="MF_00453"/>
    </source>
</evidence>
<evidence type="ECO:0000305" key="2"/>
<keyword id="KW-0067">ATP-binding</keyword>
<keyword id="KW-0963">Cytoplasm</keyword>
<keyword id="KW-0210">Decarboxylase</keyword>
<keyword id="KW-0312">Gluconeogenesis</keyword>
<keyword id="KW-0456">Lyase</keyword>
<keyword id="KW-0464">Manganese</keyword>
<keyword id="KW-0479">Metal-binding</keyword>
<keyword id="KW-0547">Nucleotide-binding</keyword>
<keyword id="KW-1185">Reference proteome</keyword>
<name>PCKA_SINFN</name>
<reference key="1">
    <citation type="journal article" date="1991" name="Mol. Gen. Genet.">
        <title>Site-directed mutagenesis and DNA sequence of pckA of Rhizobium NGR234, encoding phosphoenolpyruvate carboxykinase: gluconeogenesis and host-dependent symbiotic phenotype.</title>
        <authorList>
            <person name="Oesteraas M."/>
            <person name="Finan T.M."/>
            <person name="Stanley J."/>
        </authorList>
    </citation>
    <scope>NUCLEOTIDE SEQUENCE [GENOMIC DNA]</scope>
</reference>
<reference key="2">
    <citation type="journal article" date="2009" name="Appl. Environ. Microbiol.">
        <title>Rhizobium sp. strain NGR234 possesses a remarkable number of secretion systems.</title>
        <authorList>
            <person name="Schmeisser C."/>
            <person name="Liesegang H."/>
            <person name="Krysciak D."/>
            <person name="Bakkou N."/>
            <person name="Le Quere A."/>
            <person name="Wollherr A."/>
            <person name="Heinemeyer I."/>
            <person name="Morgenstern B."/>
            <person name="Pommerening-Roeser A."/>
            <person name="Flores M."/>
            <person name="Palacios R."/>
            <person name="Brenner S."/>
            <person name="Gottschalk G."/>
            <person name="Schmitz R.A."/>
            <person name="Broughton W.J."/>
            <person name="Perret X."/>
            <person name="Strittmatter A.W."/>
            <person name="Streit W.R."/>
        </authorList>
    </citation>
    <scope>NUCLEOTIDE SEQUENCE [LARGE SCALE GENOMIC DNA]</scope>
    <source>
        <strain>NBRC 101917 / NGR234</strain>
    </source>
</reference>
<gene>
    <name evidence="1" type="primary">pckA</name>
    <name type="ordered locus">NGR_c33940</name>
</gene>
<feature type="chain" id="PRO_0000203837" description="Phosphoenolpyruvate carboxykinase (ATP)">
    <location>
        <begin position="1"/>
        <end position="536"/>
    </location>
</feature>
<feature type="binding site" evidence="1">
    <location>
        <position position="61"/>
    </location>
    <ligand>
        <name>substrate</name>
    </ligand>
</feature>
<feature type="binding site" evidence="1">
    <location>
        <position position="195"/>
    </location>
    <ligand>
        <name>substrate</name>
    </ligand>
</feature>
<feature type="binding site" evidence="1">
    <location>
        <position position="201"/>
    </location>
    <ligand>
        <name>ATP</name>
        <dbReference type="ChEBI" id="CHEBI:30616"/>
    </ligand>
</feature>
<feature type="binding site" evidence="1">
    <location>
        <position position="201"/>
    </location>
    <ligand>
        <name>Mn(2+)</name>
        <dbReference type="ChEBI" id="CHEBI:29035"/>
    </ligand>
</feature>
<feature type="binding site" evidence="1">
    <location>
        <position position="201"/>
    </location>
    <ligand>
        <name>substrate</name>
    </ligand>
</feature>
<feature type="binding site" evidence="1">
    <location>
        <position position="220"/>
    </location>
    <ligand>
        <name>ATP</name>
        <dbReference type="ChEBI" id="CHEBI:30616"/>
    </ligand>
</feature>
<feature type="binding site" evidence="1">
    <location>
        <position position="220"/>
    </location>
    <ligand>
        <name>Mn(2+)</name>
        <dbReference type="ChEBI" id="CHEBI:29035"/>
    </ligand>
</feature>
<feature type="binding site" evidence="1">
    <location>
        <begin position="236"/>
        <end position="244"/>
    </location>
    <ligand>
        <name>ATP</name>
        <dbReference type="ChEBI" id="CHEBI:30616"/>
    </ligand>
</feature>
<feature type="binding site" evidence="1">
    <location>
        <position position="257"/>
    </location>
    <ligand>
        <name>Mn(2+)</name>
        <dbReference type="ChEBI" id="CHEBI:29035"/>
    </ligand>
</feature>
<feature type="binding site" evidence="1">
    <location>
        <position position="285"/>
    </location>
    <ligand>
        <name>ATP</name>
        <dbReference type="ChEBI" id="CHEBI:30616"/>
    </ligand>
</feature>
<feature type="binding site" evidence="1">
    <location>
        <position position="322"/>
    </location>
    <ligand>
        <name>ATP</name>
        <dbReference type="ChEBI" id="CHEBI:30616"/>
    </ligand>
</feature>
<feature type="binding site" evidence="1">
    <location>
        <position position="322"/>
    </location>
    <ligand>
        <name>substrate</name>
    </ligand>
</feature>
<feature type="binding site" evidence="1">
    <location>
        <position position="447"/>
    </location>
    <ligand>
        <name>ATP</name>
        <dbReference type="ChEBI" id="CHEBI:30616"/>
    </ligand>
</feature>
<feature type="sequence conflict" description="In Ref. 1; CAA44925." evidence="2" ref="1">
    <original>A</original>
    <variation>G</variation>
    <location>
        <position position="148"/>
    </location>
</feature>
<feature type="sequence conflict" description="In Ref. 1; CAA44925." evidence="2" ref="1">
    <original>G</original>
    <variation>A</variation>
    <location>
        <position position="354"/>
    </location>
</feature>
<feature type="sequence conflict" description="In Ref. 1; CAA44925." evidence="2" ref="1">
    <original>IA</original>
    <variation>MP</variation>
    <location>
        <begin position="417"/>
        <end position="418"/>
    </location>
</feature>
<feature type="sequence conflict" description="In Ref. 1; CAA44925." evidence="2" ref="1">
    <original>SA</original>
    <variation>RP</variation>
    <location>
        <begin position="461"/>
        <end position="462"/>
    </location>
</feature>
<feature type="sequence conflict" description="In Ref. 1; CAA44925." evidence="2" ref="1">
    <original>G</original>
    <variation>AD</variation>
    <location>
        <position position="480"/>
    </location>
</feature>
<feature type="sequence conflict" description="In Ref. 1; CAA44925." evidence="2" ref="1">
    <original>D</original>
    <variation>A</variation>
    <location>
        <position position="494"/>
    </location>
</feature>
<accession>P43086</accession>
<accession>C3MBB5</accession>
<protein>
    <recommendedName>
        <fullName evidence="1">Phosphoenolpyruvate carboxykinase (ATP)</fullName>
        <shortName evidence="1">PCK</shortName>
        <shortName evidence="1">PEP carboxykinase</shortName>
        <shortName evidence="1">PEPCK</shortName>
        <ecNumber evidence="1">4.1.1.49</ecNumber>
    </recommendedName>
</protein>
<comment type="function">
    <text evidence="1">Involved in the gluconeogenesis. Catalyzes the conversion of oxaloacetate (OAA) to phosphoenolpyruvate (PEP) through direct phosphoryl transfer between the nucleoside triphosphate and OAA.</text>
</comment>
<comment type="catalytic activity">
    <reaction evidence="1">
        <text>oxaloacetate + ATP = phosphoenolpyruvate + ADP + CO2</text>
        <dbReference type="Rhea" id="RHEA:18617"/>
        <dbReference type="ChEBI" id="CHEBI:16452"/>
        <dbReference type="ChEBI" id="CHEBI:16526"/>
        <dbReference type="ChEBI" id="CHEBI:30616"/>
        <dbReference type="ChEBI" id="CHEBI:58702"/>
        <dbReference type="ChEBI" id="CHEBI:456216"/>
        <dbReference type="EC" id="4.1.1.49"/>
    </reaction>
</comment>
<comment type="cofactor">
    <cofactor evidence="1">
        <name>Mn(2+)</name>
        <dbReference type="ChEBI" id="CHEBI:29035"/>
    </cofactor>
    <text evidence="1">Binds 1 Mn(2+) ion per subunit.</text>
</comment>
<comment type="pathway">
    <text evidence="1">Carbohydrate biosynthesis; gluconeogenesis.</text>
</comment>
<comment type="subcellular location">
    <subcellularLocation>
        <location evidence="1">Cytoplasm</location>
    </subcellularLocation>
</comment>
<comment type="similarity">
    <text evidence="1">Belongs to the phosphoenolpyruvate carboxykinase (ATP) family.</text>
</comment>
<proteinExistence type="inferred from homology"/>
<dbReference type="EC" id="4.1.1.49" evidence="1"/>
<dbReference type="EMBL" id="X63291">
    <property type="protein sequence ID" value="CAA44925.1"/>
    <property type="molecule type" value="Genomic_DNA"/>
</dbReference>
<dbReference type="EMBL" id="CP001389">
    <property type="protein sequence ID" value="ACP27124.1"/>
    <property type="molecule type" value="Genomic_DNA"/>
</dbReference>
<dbReference type="RefSeq" id="WP_012709871.1">
    <property type="nucleotide sequence ID" value="NC_012587.1"/>
</dbReference>
<dbReference type="RefSeq" id="YP_002827877.1">
    <property type="nucleotide sequence ID" value="NC_012587.1"/>
</dbReference>
<dbReference type="SMR" id="P43086"/>
<dbReference type="STRING" id="394.NGR_c33940"/>
<dbReference type="KEGG" id="rhi:NGR_c33940"/>
<dbReference type="PATRIC" id="fig|394.7.peg.6243"/>
<dbReference type="eggNOG" id="COG1866">
    <property type="taxonomic scope" value="Bacteria"/>
</dbReference>
<dbReference type="HOGENOM" id="CLU_018247_0_1_5"/>
<dbReference type="OrthoDB" id="9806325at2"/>
<dbReference type="UniPathway" id="UPA00138"/>
<dbReference type="Proteomes" id="UP000001054">
    <property type="component" value="Chromosome"/>
</dbReference>
<dbReference type="GO" id="GO:0005829">
    <property type="term" value="C:cytosol"/>
    <property type="evidence" value="ECO:0007669"/>
    <property type="project" value="TreeGrafter"/>
</dbReference>
<dbReference type="GO" id="GO:0005524">
    <property type="term" value="F:ATP binding"/>
    <property type="evidence" value="ECO:0007669"/>
    <property type="project" value="UniProtKB-UniRule"/>
</dbReference>
<dbReference type="GO" id="GO:0046872">
    <property type="term" value="F:metal ion binding"/>
    <property type="evidence" value="ECO:0007669"/>
    <property type="project" value="UniProtKB-KW"/>
</dbReference>
<dbReference type="GO" id="GO:0004612">
    <property type="term" value="F:phosphoenolpyruvate carboxykinase (ATP) activity"/>
    <property type="evidence" value="ECO:0007669"/>
    <property type="project" value="UniProtKB-UniRule"/>
</dbReference>
<dbReference type="GO" id="GO:0006094">
    <property type="term" value="P:gluconeogenesis"/>
    <property type="evidence" value="ECO:0007669"/>
    <property type="project" value="UniProtKB-UniRule"/>
</dbReference>
<dbReference type="CDD" id="cd00484">
    <property type="entry name" value="PEPCK_ATP"/>
    <property type="match status" value="1"/>
</dbReference>
<dbReference type="Gene3D" id="3.90.228.20">
    <property type="match status" value="1"/>
</dbReference>
<dbReference type="Gene3D" id="3.40.449.10">
    <property type="entry name" value="Phosphoenolpyruvate Carboxykinase, domain 1"/>
    <property type="match status" value="1"/>
</dbReference>
<dbReference type="Gene3D" id="2.170.8.10">
    <property type="entry name" value="Phosphoenolpyruvate Carboxykinase, domain 2"/>
    <property type="match status" value="1"/>
</dbReference>
<dbReference type="HAMAP" id="MF_00453">
    <property type="entry name" value="PEPCK_ATP"/>
    <property type="match status" value="1"/>
</dbReference>
<dbReference type="InterPro" id="IPR001272">
    <property type="entry name" value="PEP_carboxykinase_ATP"/>
</dbReference>
<dbReference type="InterPro" id="IPR013035">
    <property type="entry name" value="PEP_carboxykinase_C"/>
</dbReference>
<dbReference type="InterPro" id="IPR008210">
    <property type="entry name" value="PEP_carboxykinase_N"/>
</dbReference>
<dbReference type="InterPro" id="IPR015994">
    <property type="entry name" value="PEPCK_ATP_CS"/>
</dbReference>
<dbReference type="NCBIfam" id="TIGR00224">
    <property type="entry name" value="pckA"/>
    <property type="match status" value="1"/>
</dbReference>
<dbReference type="NCBIfam" id="NF006820">
    <property type="entry name" value="PRK09344.1-2"/>
    <property type="match status" value="1"/>
</dbReference>
<dbReference type="NCBIfam" id="NF006821">
    <property type="entry name" value="PRK09344.1-3"/>
    <property type="match status" value="1"/>
</dbReference>
<dbReference type="NCBIfam" id="NF006822">
    <property type="entry name" value="PRK09344.1-4"/>
    <property type="match status" value="1"/>
</dbReference>
<dbReference type="PANTHER" id="PTHR30031:SF0">
    <property type="entry name" value="PHOSPHOENOLPYRUVATE CARBOXYKINASE (ATP)"/>
    <property type="match status" value="1"/>
</dbReference>
<dbReference type="PANTHER" id="PTHR30031">
    <property type="entry name" value="PHOSPHOENOLPYRUVATE CARBOXYKINASE ATP"/>
    <property type="match status" value="1"/>
</dbReference>
<dbReference type="Pfam" id="PF01293">
    <property type="entry name" value="PEPCK_ATP"/>
    <property type="match status" value="1"/>
</dbReference>
<dbReference type="PIRSF" id="PIRSF006294">
    <property type="entry name" value="PEP_crbxkin"/>
    <property type="match status" value="1"/>
</dbReference>
<dbReference type="SUPFAM" id="SSF68923">
    <property type="entry name" value="PEP carboxykinase N-terminal domain"/>
    <property type="match status" value="1"/>
</dbReference>
<dbReference type="SUPFAM" id="SSF53795">
    <property type="entry name" value="PEP carboxykinase-like"/>
    <property type="match status" value="1"/>
</dbReference>
<dbReference type="PROSITE" id="PS00532">
    <property type="entry name" value="PEPCK_ATP"/>
    <property type="match status" value="1"/>
</dbReference>